<keyword id="KW-0007">Acetylation</keyword>
<keyword id="KW-0106">Calcium</keyword>
<keyword id="KW-0131">Cell cycle</keyword>
<keyword id="KW-0132">Cell division</keyword>
<keyword id="KW-0963">Cytoplasm</keyword>
<keyword id="KW-0206">Cytoskeleton</keyword>
<keyword id="KW-0227">DNA damage</keyword>
<keyword id="KW-0234">DNA repair</keyword>
<keyword id="KW-1017">Isopeptide bond</keyword>
<keyword id="KW-0479">Metal-binding</keyword>
<keyword id="KW-0498">Mitosis</keyword>
<keyword id="KW-0509">mRNA transport</keyword>
<keyword id="KW-0906">Nuclear pore complex</keyword>
<keyword id="KW-0539">Nucleus</keyword>
<keyword id="KW-0597">Phosphoprotein</keyword>
<keyword id="KW-0653">Protein transport</keyword>
<keyword id="KW-1185">Reference proteome</keyword>
<keyword id="KW-0677">Repeat</keyword>
<keyword id="KW-0811">Translocation</keyword>
<keyword id="KW-0813">Transport</keyword>
<keyword id="KW-0832">Ubl conjugation</keyword>
<reference key="1">
    <citation type="submission" date="2005-11" db="EMBL/GenBank/DDBJ databases">
        <authorList>
            <consortium name="NIH - Mammalian Gene Collection (MGC) project"/>
        </authorList>
    </citation>
    <scope>NUCLEOTIDE SEQUENCE [LARGE SCALE MRNA]</scope>
    <source>
        <strain>Crossbred X Angus</strain>
        <tissue>Liver</tissue>
    </source>
</reference>
<organism>
    <name type="scientific">Bos taurus</name>
    <name type="common">Bovine</name>
    <dbReference type="NCBI Taxonomy" id="9913"/>
    <lineage>
        <taxon>Eukaryota</taxon>
        <taxon>Metazoa</taxon>
        <taxon>Chordata</taxon>
        <taxon>Craniata</taxon>
        <taxon>Vertebrata</taxon>
        <taxon>Euteleostomi</taxon>
        <taxon>Mammalia</taxon>
        <taxon>Eutheria</taxon>
        <taxon>Laurasiatheria</taxon>
        <taxon>Artiodactyla</taxon>
        <taxon>Ruminantia</taxon>
        <taxon>Pecora</taxon>
        <taxon>Bovidae</taxon>
        <taxon>Bovinae</taxon>
        <taxon>Bos</taxon>
    </lineage>
</organism>
<sequence length="172" mass="19810">MASNFKKANMASTTQRKRMSPKPELTEEQKQEIREAFDLFDADGTGTIDVKELKVAMRALGFEPKKEEIKKMISEIDKEGTGKMNFSDFLTVMTQKMSEKDTKEEILKAFKLFDDDETGKISFKNLKRVAKELGENLSDEELQEMIDEADRDGDGEVNEQEFLRIMKKTSLY</sequence>
<protein>
    <recommendedName>
        <fullName>Centrin-2</fullName>
    </recommendedName>
</protein>
<accession>Q2TBN3</accession>
<proteinExistence type="evidence at transcript level"/>
<dbReference type="EMBL" id="BC109888">
    <property type="protein sequence ID" value="AAI09889.1"/>
    <property type="molecule type" value="mRNA"/>
</dbReference>
<dbReference type="RefSeq" id="NP_001033604.1">
    <property type="nucleotide sequence ID" value="NM_001038515.1"/>
</dbReference>
<dbReference type="EMDB" id="EMD-50664"/>
<dbReference type="SMR" id="Q2TBN3"/>
<dbReference type="FunCoup" id="Q2TBN3">
    <property type="interactions" value="1625"/>
</dbReference>
<dbReference type="STRING" id="9913.ENSBTAP00000010319"/>
<dbReference type="PaxDb" id="9913-ENSBTAP00000010319"/>
<dbReference type="Ensembl" id="ENSBTAT00000010319.5">
    <property type="protein sequence ID" value="ENSBTAP00000010319.3"/>
    <property type="gene ID" value="ENSBTAG00000007844.5"/>
</dbReference>
<dbReference type="GeneID" id="508601"/>
<dbReference type="KEGG" id="bta:508601"/>
<dbReference type="CTD" id="1069"/>
<dbReference type="VEuPathDB" id="HostDB:ENSBTAG00000007844"/>
<dbReference type="VGNC" id="VGNC:27234">
    <property type="gene designation" value="CETN2"/>
</dbReference>
<dbReference type="eggNOG" id="KOG0028">
    <property type="taxonomic scope" value="Eukaryota"/>
</dbReference>
<dbReference type="GeneTree" id="ENSGT00940000155935"/>
<dbReference type="HOGENOM" id="CLU_061288_18_2_1"/>
<dbReference type="InParanoid" id="Q2TBN3"/>
<dbReference type="OMA" id="HPGLTQQ"/>
<dbReference type="OrthoDB" id="343296at2759"/>
<dbReference type="TreeFam" id="TF101141"/>
<dbReference type="Reactome" id="R-BTA-2565942">
    <property type="pathway name" value="Regulation of PLK1 Activity at G2/M Transition"/>
</dbReference>
<dbReference type="Reactome" id="R-BTA-3108214">
    <property type="pathway name" value="SUMOylation of DNA damage response and repair proteins"/>
</dbReference>
<dbReference type="Reactome" id="R-BTA-380259">
    <property type="pathway name" value="Loss of Nlp from mitotic centrosomes"/>
</dbReference>
<dbReference type="Reactome" id="R-BTA-380270">
    <property type="pathway name" value="Recruitment of mitotic centrosome proteins and complexes"/>
</dbReference>
<dbReference type="Reactome" id="R-BTA-380284">
    <property type="pathway name" value="Loss of proteins required for interphase microtubule organization from the centrosome"/>
</dbReference>
<dbReference type="Reactome" id="R-BTA-380320">
    <property type="pathway name" value="Recruitment of NuMA to mitotic centrosomes"/>
</dbReference>
<dbReference type="Reactome" id="R-BTA-5620912">
    <property type="pathway name" value="Anchoring of the basal body to the plasma membrane"/>
</dbReference>
<dbReference type="Reactome" id="R-BTA-5696394">
    <property type="pathway name" value="DNA Damage Recognition in GG-NER"/>
</dbReference>
<dbReference type="Reactome" id="R-BTA-5696395">
    <property type="pathway name" value="Formation of Incision Complex in GG-NER"/>
</dbReference>
<dbReference type="Reactome" id="R-BTA-8854518">
    <property type="pathway name" value="AURKA Activation by TPX2"/>
</dbReference>
<dbReference type="Proteomes" id="UP000009136">
    <property type="component" value="Chromosome X"/>
</dbReference>
<dbReference type="Bgee" id="ENSBTAG00000007844">
    <property type="expression patterns" value="Expressed in oviduct epithelium and 107 other cell types or tissues"/>
</dbReference>
<dbReference type="GO" id="GO:0097729">
    <property type="term" value="C:9+2 motile cilium"/>
    <property type="evidence" value="ECO:0007669"/>
    <property type="project" value="Ensembl"/>
</dbReference>
<dbReference type="GO" id="GO:0045177">
    <property type="term" value="C:apical part of cell"/>
    <property type="evidence" value="ECO:0007669"/>
    <property type="project" value="Ensembl"/>
</dbReference>
<dbReference type="GO" id="GO:0005814">
    <property type="term" value="C:centriole"/>
    <property type="evidence" value="ECO:0000250"/>
    <property type="project" value="UniProtKB"/>
</dbReference>
<dbReference type="GO" id="GO:0005813">
    <property type="term" value="C:centrosome"/>
    <property type="evidence" value="ECO:0000250"/>
    <property type="project" value="UniProtKB"/>
</dbReference>
<dbReference type="GO" id="GO:0036064">
    <property type="term" value="C:ciliary basal body"/>
    <property type="evidence" value="ECO:0007669"/>
    <property type="project" value="Ensembl"/>
</dbReference>
<dbReference type="GO" id="GO:0005737">
    <property type="term" value="C:cytoplasm"/>
    <property type="evidence" value="ECO:0007669"/>
    <property type="project" value="UniProtKB-KW"/>
</dbReference>
<dbReference type="GO" id="GO:0097386">
    <property type="term" value="C:glial cell projection"/>
    <property type="evidence" value="ECO:0007669"/>
    <property type="project" value="Ensembl"/>
</dbReference>
<dbReference type="GO" id="GO:0044615">
    <property type="term" value="C:nuclear pore nuclear basket"/>
    <property type="evidence" value="ECO:0000250"/>
    <property type="project" value="UniProtKB"/>
</dbReference>
<dbReference type="GO" id="GO:0005634">
    <property type="term" value="C:nucleus"/>
    <property type="evidence" value="ECO:0000318"/>
    <property type="project" value="GO_Central"/>
</dbReference>
<dbReference type="GO" id="GO:0032391">
    <property type="term" value="C:photoreceptor connecting cilium"/>
    <property type="evidence" value="ECO:0007669"/>
    <property type="project" value="Ensembl"/>
</dbReference>
<dbReference type="GO" id="GO:0070390">
    <property type="term" value="C:transcription export complex 2"/>
    <property type="evidence" value="ECO:0000250"/>
    <property type="project" value="UniProtKB"/>
</dbReference>
<dbReference type="GO" id="GO:0071942">
    <property type="term" value="C:XPC complex"/>
    <property type="evidence" value="ECO:0000250"/>
    <property type="project" value="UniProtKB"/>
</dbReference>
<dbReference type="GO" id="GO:0005509">
    <property type="term" value="F:calcium ion binding"/>
    <property type="evidence" value="ECO:0000318"/>
    <property type="project" value="GO_Central"/>
</dbReference>
<dbReference type="GO" id="GO:0031683">
    <property type="term" value="F:G-protein beta/gamma-subunit complex binding"/>
    <property type="evidence" value="ECO:0007669"/>
    <property type="project" value="Ensembl"/>
</dbReference>
<dbReference type="GO" id="GO:0032795">
    <property type="term" value="F:heterotrimeric G-protein binding"/>
    <property type="evidence" value="ECO:0007669"/>
    <property type="project" value="Ensembl"/>
</dbReference>
<dbReference type="GO" id="GO:0008017">
    <property type="term" value="F:microtubule binding"/>
    <property type="evidence" value="ECO:0007669"/>
    <property type="project" value="Ensembl"/>
</dbReference>
<dbReference type="GO" id="GO:0051301">
    <property type="term" value="P:cell division"/>
    <property type="evidence" value="ECO:0007669"/>
    <property type="project" value="UniProtKB-KW"/>
</dbReference>
<dbReference type="GO" id="GO:0007099">
    <property type="term" value="P:centriole replication"/>
    <property type="evidence" value="ECO:0000318"/>
    <property type="project" value="GO_Central"/>
</dbReference>
<dbReference type="GO" id="GO:0000226">
    <property type="term" value="P:microtubule cytoskeleton organization"/>
    <property type="evidence" value="ECO:0000318"/>
    <property type="project" value="GO_Central"/>
</dbReference>
<dbReference type="GO" id="GO:0051028">
    <property type="term" value="P:mRNA transport"/>
    <property type="evidence" value="ECO:0007669"/>
    <property type="project" value="UniProtKB-KW"/>
</dbReference>
<dbReference type="GO" id="GO:0006289">
    <property type="term" value="P:nucleotide-excision repair"/>
    <property type="evidence" value="ECO:0000318"/>
    <property type="project" value="GO_Central"/>
</dbReference>
<dbReference type="GO" id="GO:0015031">
    <property type="term" value="P:protein transport"/>
    <property type="evidence" value="ECO:0007669"/>
    <property type="project" value="UniProtKB-KW"/>
</dbReference>
<dbReference type="GO" id="GO:0032465">
    <property type="term" value="P:regulation of cytokinesis"/>
    <property type="evidence" value="ECO:0007669"/>
    <property type="project" value="Ensembl"/>
</dbReference>
<dbReference type="GO" id="GO:0007283">
    <property type="term" value="P:spermatogenesis"/>
    <property type="evidence" value="ECO:0007669"/>
    <property type="project" value="Ensembl"/>
</dbReference>
<dbReference type="CDD" id="cd00051">
    <property type="entry name" value="EFh"/>
    <property type="match status" value="2"/>
</dbReference>
<dbReference type="FunFam" id="1.10.238.10:FF:000077">
    <property type="entry name" value="Centrin 1"/>
    <property type="match status" value="1"/>
</dbReference>
<dbReference type="FunFam" id="1.10.238.10:FF:000070">
    <property type="entry name" value="Centrin-1"/>
    <property type="match status" value="1"/>
</dbReference>
<dbReference type="Gene3D" id="1.10.238.10">
    <property type="entry name" value="EF-hand"/>
    <property type="match status" value="3"/>
</dbReference>
<dbReference type="InterPro" id="IPR050145">
    <property type="entry name" value="Centrin_CML-like"/>
</dbReference>
<dbReference type="InterPro" id="IPR011992">
    <property type="entry name" value="EF-hand-dom_pair"/>
</dbReference>
<dbReference type="InterPro" id="IPR018247">
    <property type="entry name" value="EF_Hand_1_Ca_BS"/>
</dbReference>
<dbReference type="InterPro" id="IPR002048">
    <property type="entry name" value="EF_hand_dom"/>
</dbReference>
<dbReference type="InterPro" id="IPR000629">
    <property type="entry name" value="RNA-helicase_DEAD-box_CS"/>
</dbReference>
<dbReference type="PANTHER" id="PTHR23050">
    <property type="entry name" value="CALCIUM BINDING PROTEIN"/>
    <property type="match status" value="1"/>
</dbReference>
<dbReference type="Pfam" id="PF13499">
    <property type="entry name" value="EF-hand_7"/>
    <property type="match status" value="2"/>
</dbReference>
<dbReference type="SMART" id="SM00054">
    <property type="entry name" value="EFh"/>
    <property type="match status" value="4"/>
</dbReference>
<dbReference type="SUPFAM" id="SSF47473">
    <property type="entry name" value="EF-hand"/>
    <property type="match status" value="1"/>
</dbReference>
<dbReference type="PROSITE" id="PS00018">
    <property type="entry name" value="EF_HAND_1"/>
    <property type="match status" value="2"/>
</dbReference>
<dbReference type="PROSITE" id="PS50222">
    <property type="entry name" value="EF_HAND_2"/>
    <property type="match status" value="4"/>
</dbReference>
<name>CETN2_BOVIN</name>
<evidence type="ECO:0000250" key="1"/>
<evidence type="ECO:0000250" key="2">
    <source>
        <dbReference type="UniProtKB" id="P41208"/>
    </source>
</evidence>
<evidence type="ECO:0000255" key="3">
    <source>
        <dbReference type="PROSITE-ProRule" id="PRU00448"/>
    </source>
</evidence>
<evidence type="ECO:0000256" key="4">
    <source>
        <dbReference type="SAM" id="MobiDB-lite"/>
    </source>
</evidence>
<evidence type="ECO:0000305" key="5"/>
<gene>
    <name type="primary">CETN2</name>
</gene>
<feature type="initiator methionine" description="Removed" evidence="2">
    <location>
        <position position="1"/>
    </location>
</feature>
<feature type="chain" id="PRO_0000244558" description="Centrin-2">
    <location>
        <begin position="2"/>
        <end position="172"/>
    </location>
</feature>
<feature type="domain" description="EF-hand 1" evidence="3">
    <location>
        <begin position="28"/>
        <end position="63"/>
    </location>
</feature>
<feature type="domain" description="EF-hand 2" evidence="3">
    <location>
        <begin position="64"/>
        <end position="99"/>
    </location>
</feature>
<feature type="domain" description="EF-hand 3" evidence="3">
    <location>
        <begin position="101"/>
        <end position="136"/>
    </location>
</feature>
<feature type="domain" description="EF-hand 4" evidence="3">
    <location>
        <begin position="137"/>
        <end position="172"/>
    </location>
</feature>
<feature type="region of interest" description="Disordered" evidence="4">
    <location>
        <begin position="1"/>
        <end position="31"/>
    </location>
</feature>
<feature type="region of interest" description="Required for self-assembly" evidence="1">
    <location>
        <begin position="2"/>
        <end position="25"/>
    </location>
</feature>
<feature type="binding site" evidence="3">
    <location>
        <position position="41"/>
    </location>
    <ligand>
        <name>Ca(2+)</name>
        <dbReference type="ChEBI" id="CHEBI:29108"/>
        <label>1</label>
    </ligand>
</feature>
<feature type="binding site" evidence="3">
    <location>
        <position position="43"/>
    </location>
    <ligand>
        <name>Ca(2+)</name>
        <dbReference type="ChEBI" id="CHEBI:29108"/>
        <label>1</label>
    </ligand>
</feature>
<feature type="binding site" evidence="3">
    <location>
        <position position="45"/>
    </location>
    <ligand>
        <name>Ca(2+)</name>
        <dbReference type="ChEBI" id="CHEBI:29108"/>
        <label>1</label>
    </ligand>
</feature>
<feature type="binding site" evidence="3">
    <location>
        <position position="47"/>
    </location>
    <ligand>
        <name>Ca(2+)</name>
        <dbReference type="ChEBI" id="CHEBI:29108"/>
        <label>1</label>
    </ligand>
</feature>
<feature type="binding site" evidence="3">
    <location>
        <position position="52"/>
    </location>
    <ligand>
        <name>Ca(2+)</name>
        <dbReference type="ChEBI" id="CHEBI:29108"/>
        <label>1</label>
    </ligand>
</feature>
<feature type="binding site" evidence="3">
    <location>
        <position position="150"/>
    </location>
    <ligand>
        <name>Ca(2+)</name>
        <dbReference type="ChEBI" id="CHEBI:29108"/>
        <label>2</label>
    </ligand>
</feature>
<feature type="binding site" evidence="3">
    <location>
        <position position="152"/>
    </location>
    <ligand>
        <name>Ca(2+)</name>
        <dbReference type="ChEBI" id="CHEBI:29108"/>
        <label>2</label>
    </ligand>
</feature>
<feature type="binding site" evidence="3">
    <location>
        <position position="154"/>
    </location>
    <ligand>
        <name>Ca(2+)</name>
        <dbReference type="ChEBI" id="CHEBI:29108"/>
        <label>2</label>
    </ligand>
</feature>
<feature type="binding site" evidence="3">
    <location>
        <position position="156"/>
    </location>
    <ligand>
        <name>Ca(2+)</name>
        <dbReference type="ChEBI" id="CHEBI:29108"/>
        <label>2</label>
    </ligand>
</feature>
<feature type="binding site" evidence="3">
    <location>
        <position position="161"/>
    </location>
    <ligand>
        <name>Ca(2+)</name>
        <dbReference type="ChEBI" id="CHEBI:29108"/>
        <label>2</label>
    </ligand>
</feature>
<feature type="modified residue" description="N-acetylalanine" evidence="2">
    <location>
        <position position="2"/>
    </location>
</feature>
<feature type="modified residue" description="Phosphoserine" evidence="2">
    <location>
        <position position="20"/>
    </location>
</feature>
<feature type="modified residue" description="Phosphothreonine" evidence="2">
    <location>
        <position position="26"/>
    </location>
</feature>
<feature type="cross-link" description="Glycyl lysine isopeptide (Lys-Gly) (interchain with G-Cter in SUMO2)" evidence="2">
    <location>
        <position position="22"/>
    </location>
</feature>
<comment type="function">
    <text evidence="1">Plays a fundamental role in microtubule organizing center structure and function. Required for centriole duplication and correct spindle formation. Has a role in regulating cytokinesis and genome stability via cooperation with CALM1 and CCP110 (By similarity).</text>
</comment>
<comment type="function">
    <text evidence="1">Involved in global genome nucleotide excision repair (GG-NER) by acting as component of the XPC complex. Cooperatively with RAD23B appears to stabilize XPC. In vitro, stimulates DNA binding of the XPC:RAD23B dimer (By similarity).</text>
</comment>
<comment type="function">
    <text evidence="1">The XPC complex is proposed to represent the first factor bound at the sites of DNA damage and together with other core recognition factors, XPA, RPA and the TFIIH complex, is part of the pre-incision (or initial recognition) complex. The XPC complex recognizes a wide spectrum of damaged DNA characterized by distortions of the DNA helix such as single-stranded loops, mismatched bubbles or single-stranded overhangs. The orientation of XPC complex binding appears to be crucial for inducing a productive NER. XPC complex is proposed to recognize and to interact with unpaired bases on the undamaged DNA strand which is followed by recruitment of the TFIIH complex and subsequent scanning for lesions in the opposite strand in a 5'-to-3' direction by the NER machinery. Cyclobutane pyrimidine dimers (CPDs) which are formed upon UV-induced DNA damage esacpe detection by the XPC complex due to a low degree of structural perurbation. Instead they are detected by the UV-DDB complex which in turn recruits and cooperates with the XPC complex in the respective DNA repair (By similarity).</text>
</comment>
<comment type="function">
    <text evidence="2">As a component of the TREX-2 complex, involved in the export of mRNAs to the cytoplasm through the nuclear pores.</text>
</comment>
<comment type="subunit">
    <text evidence="2">Monomer. Homooligomer. Interacts with CCP110, SFI1. Component of the XPC complex composed of XPC, RAD23B and CETN2 (By similarity). Component of the nuclear pore complex (NPC)-associated TREX-2 complex (transcription and export complex 2), composed of at least GANP, 2 copies of ENY2, PCID2, SEM1/DSS1, and either centrin CETN2 or centrin CETN3. The TREX-2 complex also associates with ALYREF/ALY and with the nucleoporin NUP153 (By similarity). Interacts with USP49 (By similarity). Forms a microtubule-associated complex with POC5, POC1B and FAM161A (By similarity). Interacts with CCDC15 (By similarity).</text>
</comment>
<comment type="subcellular location">
    <subcellularLocation>
        <location evidence="2">Cytoplasm</location>
        <location evidence="2">Cytoskeleton</location>
        <location evidence="2">Microtubule organizing center</location>
        <location evidence="2">Centrosome</location>
    </subcellularLocation>
    <subcellularLocation>
        <location evidence="2">Cytoplasm</location>
        <location evidence="2">Cytoskeleton</location>
        <location evidence="2">Microtubule organizing center</location>
        <location evidence="2">Centrosome</location>
        <location evidence="2">Centriole</location>
    </subcellularLocation>
    <subcellularLocation>
        <location evidence="2">Nucleus</location>
    </subcellularLocation>
    <subcellularLocation>
        <location evidence="2">Nucleus envelope</location>
    </subcellularLocation>
    <subcellularLocation>
        <location evidence="2">Nucleus</location>
        <location evidence="2">Nuclear pore complex</location>
    </subcellularLocation>
    <text evidence="2">Localizes to the inner scaffold in the central region of centrioles and to the distal end of centrioles.</text>
</comment>
<comment type="miscellaneous">
    <text evidence="1">Binds two moles of calcium per mole of protein.</text>
</comment>
<comment type="similarity">
    <text evidence="5">Belongs to the centrin family.</text>
</comment>